<keyword id="KW-0732">Signal</keyword>
<evidence type="ECO:0000255" key="1"/>
<evidence type="ECO:0000256" key="2">
    <source>
        <dbReference type="SAM" id="MobiDB-lite"/>
    </source>
</evidence>
<evidence type="ECO:0000305" key="3"/>
<reference key="1">
    <citation type="journal article" date="1991" name="Mol. Gen. Genet.">
        <title>Nucleotide sequence and molecular analysis of the low temperature induced cereal gene, BLT4.</title>
        <authorList>
            <person name="Dunn M.A."/>
            <person name="Hughes M.A."/>
            <person name="Zhang L."/>
            <person name="Pearce R.S."/>
            <person name="Quigley A.S."/>
            <person name="Jack P.L."/>
        </authorList>
    </citation>
    <scope>NUCLEOTIDE SEQUENCE [MRNA]</scope>
    <source>
        <strain>cv. Igri</strain>
        <tissue>Meristem</tissue>
    </source>
</reference>
<proteinExistence type="evidence at transcript level"/>
<organism>
    <name type="scientific">Hordeum vulgare</name>
    <name type="common">Barley</name>
    <dbReference type="NCBI Taxonomy" id="4513"/>
    <lineage>
        <taxon>Eukaryota</taxon>
        <taxon>Viridiplantae</taxon>
        <taxon>Streptophyta</taxon>
        <taxon>Embryophyta</taxon>
        <taxon>Tracheophyta</taxon>
        <taxon>Spermatophyta</taxon>
        <taxon>Magnoliopsida</taxon>
        <taxon>Liliopsida</taxon>
        <taxon>Poales</taxon>
        <taxon>Poaceae</taxon>
        <taxon>BOP clade</taxon>
        <taxon>Pooideae</taxon>
        <taxon>Triticodae</taxon>
        <taxon>Triticeae</taxon>
        <taxon>Hordeinae</taxon>
        <taxon>Hordeum</taxon>
    </lineage>
</organism>
<feature type="signal peptide" evidence="1">
    <location>
        <begin position="1"/>
        <end position="25"/>
    </location>
</feature>
<feature type="chain" id="PRO_0000018415" description="Protein BLT4">
    <location>
        <begin position="26"/>
        <end position="130"/>
    </location>
</feature>
<feature type="region of interest" description="Disordered" evidence="2">
    <location>
        <begin position="80"/>
        <end position="130"/>
    </location>
</feature>
<feature type="compositionally biased region" description="Low complexity" evidence="2">
    <location>
        <begin position="84"/>
        <end position="110"/>
    </location>
</feature>
<feature type="compositionally biased region" description="Basic and acidic residues" evidence="2">
    <location>
        <begin position="113"/>
        <end position="130"/>
    </location>
</feature>
<dbReference type="EMBL" id="X56547">
    <property type="protein sequence ID" value="CAA39887.1"/>
    <property type="molecule type" value="mRNA"/>
</dbReference>
<dbReference type="PIR" id="S17961">
    <property type="entry name" value="S17961"/>
</dbReference>
<dbReference type="SMR" id="P25307"/>
<dbReference type="GO" id="GO:0008289">
    <property type="term" value="F:lipid binding"/>
    <property type="evidence" value="ECO:0007669"/>
    <property type="project" value="InterPro"/>
</dbReference>
<dbReference type="GO" id="GO:0006869">
    <property type="term" value="P:lipid transport"/>
    <property type="evidence" value="ECO:0007669"/>
    <property type="project" value="InterPro"/>
</dbReference>
<dbReference type="Gene3D" id="1.10.110.10">
    <property type="entry name" value="Plant lipid-transfer and hydrophobic proteins"/>
    <property type="match status" value="1"/>
</dbReference>
<dbReference type="InterPro" id="IPR036312">
    <property type="entry name" value="Bifun_inhib/LTP/seed_sf"/>
</dbReference>
<dbReference type="InterPro" id="IPR016140">
    <property type="entry name" value="Bifunc_inhib/LTP/seed_store"/>
</dbReference>
<dbReference type="InterPro" id="IPR000528">
    <property type="entry name" value="Plant_nsLTP"/>
</dbReference>
<dbReference type="Pfam" id="PF00234">
    <property type="entry name" value="Tryp_alpha_amyl"/>
    <property type="match status" value="1"/>
</dbReference>
<dbReference type="PRINTS" id="PR00382">
    <property type="entry name" value="LIPIDTRNSFER"/>
</dbReference>
<dbReference type="SMART" id="SM00499">
    <property type="entry name" value="AAI"/>
    <property type="match status" value="1"/>
</dbReference>
<dbReference type="SUPFAM" id="SSF47699">
    <property type="entry name" value="Bifunctional inhibitor/lipid-transfer protein/seed storage 2S albumin"/>
    <property type="match status" value="1"/>
</dbReference>
<accession>P25307</accession>
<comment type="function">
    <text>Possible dehydrative stress responsive protein. Not shown to have lipid transfer activity.</text>
</comment>
<comment type="tissue specificity">
    <text>Shoot meristem.</text>
</comment>
<comment type="induction">
    <text>By low temperature and drought.</text>
</comment>
<comment type="similarity">
    <text evidence="3">Belongs to the plant LTP family.</text>
</comment>
<name>BLT4_HORVU</name>
<sequence>MARTAATKLALVPLVAAMLLVAADAHHLRPGELCLGPLRRLRKRQRHQPSAGCCSGVKRLAGLARSTADKQATCRCLKSVPARTTPAGPQASPPGAASASPTRSAPVSTALRSTDRTRAPHISSDRRLVG</sequence>
<gene>
    <name type="primary">BLT4</name>
</gene>
<protein>
    <recommendedName>
        <fullName>Protein BLT4</fullName>
    </recommendedName>
</protein>